<proteinExistence type="inferred from homology"/>
<accession>B1ZZW8</accession>
<protein>
    <recommendedName>
        <fullName evidence="1">Serine hydroxymethyltransferase</fullName>
        <shortName evidence="1">SHMT</shortName>
        <shortName evidence="1">Serine methylase</shortName>
        <ecNumber evidence="1">2.1.2.1</ecNumber>
    </recommendedName>
</protein>
<dbReference type="EC" id="2.1.2.1" evidence="1"/>
<dbReference type="EMBL" id="CP001032">
    <property type="protein sequence ID" value="ACB77301.1"/>
    <property type="molecule type" value="Genomic_DNA"/>
</dbReference>
<dbReference type="RefSeq" id="WP_012376829.1">
    <property type="nucleotide sequence ID" value="NC_010571.1"/>
</dbReference>
<dbReference type="SMR" id="B1ZZW8"/>
<dbReference type="STRING" id="452637.Oter_4027"/>
<dbReference type="KEGG" id="ote:Oter_4027"/>
<dbReference type="eggNOG" id="COG0112">
    <property type="taxonomic scope" value="Bacteria"/>
</dbReference>
<dbReference type="HOGENOM" id="CLU_022477_2_1_0"/>
<dbReference type="OrthoDB" id="9803846at2"/>
<dbReference type="UniPathway" id="UPA00193"/>
<dbReference type="UniPathway" id="UPA00288">
    <property type="reaction ID" value="UER01023"/>
</dbReference>
<dbReference type="Proteomes" id="UP000007013">
    <property type="component" value="Chromosome"/>
</dbReference>
<dbReference type="GO" id="GO:0005829">
    <property type="term" value="C:cytosol"/>
    <property type="evidence" value="ECO:0007669"/>
    <property type="project" value="TreeGrafter"/>
</dbReference>
<dbReference type="GO" id="GO:0004372">
    <property type="term" value="F:glycine hydroxymethyltransferase activity"/>
    <property type="evidence" value="ECO:0007669"/>
    <property type="project" value="UniProtKB-UniRule"/>
</dbReference>
<dbReference type="GO" id="GO:0030170">
    <property type="term" value="F:pyridoxal phosphate binding"/>
    <property type="evidence" value="ECO:0007669"/>
    <property type="project" value="UniProtKB-UniRule"/>
</dbReference>
<dbReference type="GO" id="GO:0019264">
    <property type="term" value="P:glycine biosynthetic process from serine"/>
    <property type="evidence" value="ECO:0007669"/>
    <property type="project" value="UniProtKB-UniRule"/>
</dbReference>
<dbReference type="GO" id="GO:0035999">
    <property type="term" value="P:tetrahydrofolate interconversion"/>
    <property type="evidence" value="ECO:0007669"/>
    <property type="project" value="UniProtKB-UniRule"/>
</dbReference>
<dbReference type="CDD" id="cd00378">
    <property type="entry name" value="SHMT"/>
    <property type="match status" value="1"/>
</dbReference>
<dbReference type="FunFam" id="3.40.640.10:FF:000001">
    <property type="entry name" value="Serine hydroxymethyltransferase"/>
    <property type="match status" value="1"/>
</dbReference>
<dbReference type="Gene3D" id="3.90.1150.10">
    <property type="entry name" value="Aspartate Aminotransferase, domain 1"/>
    <property type="match status" value="1"/>
</dbReference>
<dbReference type="Gene3D" id="3.40.640.10">
    <property type="entry name" value="Type I PLP-dependent aspartate aminotransferase-like (Major domain)"/>
    <property type="match status" value="1"/>
</dbReference>
<dbReference type="HAMAP" id="MF_00051">
    <property type="entry name" value="SHMT"/>
    <property type="match status" value="1"/>
</dbReference>
<dbReference type="InterPro" id="IPR015424">
    <property type="entry name" value="PyrdxlP-dep_Trfase"/>
</dbReference>
<dbReference type="InterPro" id="IPR015421">
    <property type="entry name" value="PyrdxlP-dep_Trfase_major"/>
</dbReference>
<dbReference type="InterPro" id="IPR015422">
    <property type="entry name" value="PyrdxlP-dep_Trfase_small"/>
</dbReference>
<dbReference type="InterPro" id="IPR001085">
    <property type="entry name" value="Ser_HO-MeTrfase"/>
</dbReference>
<dbReference type="InterPro" id="IPR049943">
    <property type="entry name" value="Ser_HO-MeTrfase-like"/>
</dbReference>
<dbReference type="InterPro" id="IPR019798">
    <property type="entry name" value="Ser_HO-MeTrfase_PLP_BS"/>
</dbReference>
<dbReference type="InterPro" id="IPR039429">
    <property type="entry name" value="SHMT-like_dom"/>
</dbReference>
<dbReference type="NCBIfam" id="NF000586">
    <property type="entry name" value="PRK00011.1"/>
    <property type="match status" value="1"/>
</dbReference>
<dbReference type="PANTHER" id="PTHR11680">
    <property type="entry name" value="SERINE HYDROXYMETHYLTRANSFERASE"/>
    <property type="match status" value="1"/>
</dbReference>
<dbReference type="PANTHER" id="PTHR11680:SF35">
    <property type="entry name" value="SERINE HYDROXYMETHYLTRANSFERASE 1"/>
    <property type="match status" value="1"/>
</dbReference>
<dbReference type="Pfam" id="PF00464">
    <property type="entry name" value="SHMT"/>
    <property type="match status" value="1"/>
</dbReference>
<dbReference type="PIRSF" id="PIRSF000412">
    <property type="entry name" value="SHMT"/>
    <property type="match status" value="1"/>
</dbReference>
<dbReference type="SUPFAM" id="SSF53383">
    <property type="entry name" value="PLP-dependent transferases"/>
    <property type="match status" value="1"/>
</dbReference>
<dbReference type="PROSITE" id="PS00096">
    <property type="entry name" value="SHMT"/>
    <property type="match status" value="1"/>
</dbReference>
<feature type="chain" id="PRO_0000369942" description="Serine hydroxymethyltransferase">
    <location>
        <begin position="1"/>
        <end position="421"/>
    </location>
</feature>
<feature type="binding site" evidence="1">
    <location>
        <position position="120"/>
    </location>
    <ligand>
        <name>(6S)-5,6,7,8-tetrahydrofolate</name>
        <dbReference type="ChEBI" id="CHEBI:57453"/>
    </ligand>
</feature>
<feature type="binding site" evidence="1">
    <location>
        <begin position="124"/>
        <end position="126"/>
    </location>
    <ligand>
        <name>(6S)-5,6,7,8-tetrahydrofolate</name>
        <dbReference type="ChEBI" id="CHEBI:57453"/>
    </ligand>
</feature>
<feature type="binding site" evidence="1">
    <location>
        <begin position="354"/>
        <end position="356"/>
    </location>
    <ligand>
        <name>(6S)-5,6,7,8-tetrahydrofolate</name>
        <dbReference type="ChEBI" id="CHEBI:57453"/>
    </ligand>
</feature>
<feature type="site" description="Plays an important role in substrate specificity" evidence="1">
    <location>
        <position position="228"/>
    </location>
</feature>
<feature type="modified residue" description="N6-(pyridoxal phosphate)lysine" evidence="1">
    <location>
        <position position="229"/>
    </location>
</feature>
<name>GLYA_OPITP</name>
<reference key="1">
    <citation type="journal article" date="2011" name="J. Bacteriol.">
        <title>Genome sequence of the verrucomicrobium Opitutus terrae PB90-1, an abundant inhabitant of rice paddy soil ecosystems.</title>
        <authorList>
            <person name="van Passel M.W."/>
            <person name="Kant R."/>
            <person name="Palva A."/>
            <person name="Copeland A."/>
            <person name="Lucas S."/>
            <person name="Lapidus A."/>
            <person name="Glavina del Rio T."/>
            <person name="Pitluck S."/>
            <person name="Goltsman E."/>
            <person name="Clum A."/>
            <person name="Sun H."/>
            <person name="Schmutz J."/>
            <person name="Larimer F.W."/>
            <person name="Land M.L."/>
            <person name="Hauser L."/>
            <person name="Kyrpides N."/>
            <person name="Mikhailova N."/>
            <person name="Richardson P.P."/>
            <person name="Janssen P.H."/>
            <person name="de Vos W.M."/>
            <person name="Smidt H."/>
        </authorList>
    </citation>
    <scope>NUCLEOTIDE SEQUENCE [LARGE SCALE GENOMIC DNA]</scope>
    <source>
        <strain>DSM 11246 / JCM 15787 / PB90-1</strain>
    </source>
</reference>
<organism>
    <name type="scientific">Opitutus terrae (strain DSM 11246 / JCM 15787 / PB90-1)</name>
    <dbReference type="NCBI Taxonomy" id="452637"/>
    <lineage>
        <taxon>Bacteria</taxon>
        <taxon>Pseudomonadati</taxon>
        <taxon>Verrucomicrobiota</taxon>
        <taxon>Opitutia</taxon>
        <taxon>Opitutales</taxon>
        <taxon>Opitutaceae</taxon>
        <taxon>Opitutus</taxon>
    </lineage>
</organism>
<comment type="function">
    <text evidence="1">Catalyzes the reversible interconversion of serine and glycine with tetrahydrofolate (THF) serving as the one-carbon carrier. This reaction serves as the major source of one-carbon groups required for the biosynthesis of purines, thymidylate, methionine, and other important biomolecules. Also exhibits THF-independent aldolase activity toward beta-hydroxyamino acids, producing glycine and aldehydes, via a retro-aldol mechanism.</text>
</comment>
<comment type="catalytic activity">
    <reaction evidence="1">
        <text>(6R)-5,10-methylene-5,6,7,8-tetrahydrofolate + glycine + H2O = (6S)-5,6,7,8-tetrahydrofolate + L-serine</text>
        <dbReference type="Rhea" id="RHEA:15481"/>
        <dbReference type="ChEBI" id="CHEBI:15377"/>
        <dbReference type="ChEBI" id="CHEBI:15636"/>
        <dbReference type="ChEBI" id="CHEBI:33384"/>
        <dbReference type="ChEBI" id="CHEBI:57305"/>
        <dbReference type="ChEBI" id="CHEBI:57453"/>
        <dbReference type="EC" id="2.1.2.1"/>
    </reaction>
</comment>
<comment type="cofactor">
    <cofactor evidence="1">
        <name>pyridoxal 5'-phosphate</name>
        <dbReference type="ChEBI" id="CHEBI:597326"/>
    </cofactor>
</comment>
<comment type="pathway">
    <text evidence="1">One-carbon metabolism; tetrahydrofolate interconversion.</text>
</comment>
<comment type="pathway">
    <text evidence="1">Amino-acid biosynthesis; glycine biosynthesis; glycine from L-serine: step 1/1.</text>
</comment>
<comment type="subunit">
    <text evidence="1">Homodimer.</text>
</comment>
<comment type="subcellular location">
    <subcellularLocation>
        <location evidence="1">Cytoplasm</location>
    </subcellularLocation>
</comment>
<comment type="similarity">
    <text evidence="1">Belongs to the SHMT family.</text>
</comment>
<keyword id="KW-0028">Amino-acid biosynthesis</keyword>
<keyword id="KW-0963">Cytoplasm</keyword>
<keyword id="KW-0554">One-carbon metabolism</keyword>
<keyword id="KW-0663">Pyridoxal phosphate</keyword>
<keyword id="KW-1185">Reference proteome</keyword>
<keyword id="KW-0808">Transferase</keyword>
<evidence type="ECO:0000255" key="1">
    <source>
        <dbReference type="HAMAP-Rule" id="MF_00051"/>
    </source>
</evidence>
<sequence>MLNASPLQTLDPQVFSAISEELARQQSHIELIASENFTYPAVMEAQGSVLTNKYAEGYPAKRWYGGCEFVDKVEVLAIERAKKLFGAEHANVQPHSGAQANTAVYAAVLQPGDKVLGMNLSHGGHLTHGNPANFSGKLYQFCQYGVREDNGLIDYDELAATADREKPKMITVGASAYSRIIDFARMGEIARGVGAYLFADIAHIAGLVAAGAHPSPVPHADFVSTTTHKTLRGPRGGLVLCKAAHAKALDSAVFPGTQGGPLMHIIAAKAVCFGECLKPEFKAYSEQIVKNSKALAAAFLSRGYKIVSGGTDNHLFLVDLRTKYPELTAKKAQETLDLANITCNKNTVPFETRSPFQASGIRLGTPAVTTRGFREAHMADIADCIDSVLAAIGTEREAVVVAATKKRVTTLTSRFPLPYQL</sequence>
<gene>
    <name evidence="1" type="primary">glyA</name>
    <name type="ordered locus">Oter_4027</name>
</gene>